<reference key="1">
    <citation type="journal article" date="2008" name="J. Bacteriol.">
        <title>Genome sequence of Lactobacillus helveticus: an organism distinguished by selective gene loss and IS element expansion.</title>
        <authorList>
            <person name="Callanan M."/>
            <person name="Kaleta P."/>
            <person name="O'Callaghan J."/>
            <person name="O'Sullivan O."/>
            <person name="Jordan K."/>
            <person name="McAuliffe O."/>
            <person name="Sangrador-Vegas A."/>
            <person name="Slattery L."/>
            <person name="Fitzgerald G.F."/>
            <person name="Beresford T."/>
            <person name="Ross R.P."/>
        </authorList>
    </citation>
    <scope>NUCLEOTIDE SEQUENCE [LARGE SCALE GENOMIC DNA]</scope>
    <source>
        <strain>DPC 4571</strain>
    </source>
</reference>
<comment type="function">
    <text evidence="1">Binds 23S rRNA and is also seen to make contacts with the A and possibly P site tRNAs.</text>
</comment>
<comment type="subunit">
    <text evidence="1">Part of the 50S ribosomal subunit.</text>
</comment>
<comment type="similarity">
    <text evidence="1">Belongs to the universal ribosomal protein uL16 family.</text>
</comment>
<organism>
    <name type="scientific">Lactobacillus helveticus (strain DPC 4571)</name>
    <dbReference type="NCBI Taxonomy" id="405566"/>
    <lineage>
        <taxon>Bacteria</taxon>
        <taxon>Bacillati</taxon>
        <taxon>Bacillota</taxon>
        <taxon>Bacilli</taxon>
        <taxon>Lactobacillales</taxon>
        <taxon>Lactobacillaceae</taxon>
        <taxon>Lactobacillus</taxon>
    </lineage>
</organism>
<keyword id="KW-0687">Ribonucleoprotein</keyword>
<keyword id="KW-0689">Ribosomal protein</keyword>
<keyword id="KW-0694">RNA-binding</keyword>
<keyword id="KW-0699">rRNA-binding</keyword>
<keyword id="KW-0820">tRNA-binding</keyword>
<protein>
    <recommendedName>
        <fullName evidence="1">Large ribosomal subunit protein uL16</fullName>
    </recommendedName>
    <alternativeName>
        <fullName evidence="2">50S ribosomal protein L16</fullName>
    </alternativeName>
</protein>
<proteinExistence type="inferred from homology"/>
<dbReference type="EMBL" id="CP000517">
    <property type="protein sequence ID" value="ABX26543.1"/>
    <property type="molecule type" value="Genomic_DNA"/>
</dbReference>
<dbReference type="RefSeq" id="WP_003625792.1">
    <property type="nucleotide sequence ID" value="NC_010080.1"/>
</dbReference>
<dbReference type="SMR" id="A8YXL2"/>
<dbReference type="GeneID" id="83725540"/>
<dbReference type="KEGG" id="lhe:lhv_0319"/>
<dbReference type="eggNOG" id="COG0197">
    <property type="taxonomic scope" value="Bacteria"/>
</dbReference>
<dbReference type="HOGENOM" id="CLU_078858_2_1_9"/>
<dbReference type="Proteomes" id="UP000000790">
    <property type="component" value="Chromosome"/>
</dbReference>
<dbReference type="GO" id="GO:0022625">
    <property type="term" value="C:cytosolic large ribosomal subunit"/>
    <property type="evidence" value="ECO:0007669"/>
    <property type="project" value="TreeGrafter"/>
</dbReference>
<dbReference type="GO" id="GO:0019843">
    <property type="term" value="F:rRNA binding"/>
    <property type="evidence" value="ECO:0007669"/>
    <property type="project" value="UniProtKB-UniRule"/>
</dbReference>
<dbReference type="GO" id="GO:0003735">
    <property type="term" value="F:structural constituent of ribosome"/>
    <property type="evidence" value="ECO:0007669"/>
    <property type="project" value="InterPro"/>
</dbReference>
<dbReference type="GO" id="GO:0000049">
    <property type="term" value="F:tRNA binding"/>
    <property type="evidence" value="ECO:0007669"/>
    <property type="project" value="UniProtKB-KW"/>
</dbReference>
<dbReference type="GO" id="GO:0006412">
    <property type="term" value="P:translation"/>
    <property type="evidence" value="ECO:0007669"/>
    <property type="project" value="UniProtKB-UniRule"/>
</dbReference>
<dbReference type="CDD" id="cd01433">
    <property type="entry name" value="Ribosomal_L16_L10e"/>
    <property type="match status" value="1"/>
</dbReference>
<dbReference type="FunFam" id="3.90.1170.10:FF:000001">
    <property type="entry name" value="50S ribosomal protein L16"/>
    <property type="match status" value="1"/>
</dbReference>
<dbReference type="Gene3D" id="3.90.1170.10">
    <property type="entry name" value="Ribosomal protein L10e/L16"/>
    <property type="match status" value="1"/>
</dbReference>
<dbReference type="HAMAP" id="MF_01342">
    <property type="entry name" value="Ribosomal_uL16"/>
    <property type="match status" value="1"/>
</dbReference>
<dbReference type="InterPro" id="IPR047873">
    <property type="entry name" value="Ribosomal_uL16"/>
</dbReference>
<dbReference type="InterPro" id="IPR000114">
    <property type="entry name" value="Ribosomal_uL16_bact-type"/>
</dbReference>
<dbReference type="InterPro" id="IPR020798">
    <property type="entry name" value="Ribosomal_uL16_CS"/>
</dbReference>
<dbReference type="InterPro" id="IPR016180">
    <property type="entry name" value="Ribosomal_uL16_dom"/>
</dbReference>
<dbReference type="InterPro" id="IPR036920">
    <property type="entry name" value="Ribosomal_uL16_sf"/>
</dbReference>
<dbReference type="NCBIfam" id="TIGR01164">
    <property type="entry name" value="rplP_bact"/>
    <property type="match status" value="1"/>
</dbReference>
<dbReference type="PANTHER" id="PTHR12220">
    <property type="entry name" value="50S/60S RIBOSOMAL PROTEIN L16"/>
    <property type="match status" value="1"/>
</dbReference>
<dbReference type="PANTHER" id="PTHR12220:SF13">
    <property type="entry name" value="LARGE RIBOSOMAL SUBUNIT PROTEIN UL16M"/>
    <property type="match status" value="1"/>
</dbReference>
<dbReference type="Pfam" id="PF00252">
    <property type="entry name" value="Ribosomal_L16"/>
    <property type="match status" value="1"/>
</dbReference>
<dbReference type="PRINTS" id="PR00060">
    <property type="entry name" value="RIBOSOMALL16"/>
</dbReference>
<dbReference type="SUPFAM" id="SSF54686">
    <property type="entry name" value="Ribosomal protein L16p/L10e"/>
    <property type="match status" value="1"/>
</dbReference>
<dbReference type="PROSITE" id="PS00586">
    <property type="entry name" value="RIBOSOMAL_L16_1"/>
    <property type="match status" value="1"/>
</dbReference>
<dbReference type="PROSITE" id="PS00701">
    <property type="entry name" value="RIBOSOMAL_L16_2"/>
    <property type="match status" value="1"/>
</dbReference>
<sequence length="146" mass="16168">MPLVPKRVKHRREFRGKMRGAAKGGKYIAFGEYGLEALESHWITNRQIEAARVAMTRYMKRGGKVWIRIFPQKSYTAKGVGVRMGSGKGAPAGWVAVVKREKIMFEIGGVDEATAREALRLASTKLPIKTKFVTRSSEVGGESNEG</sequence>
<gene>
    <name evidence="1" type="primary">rplP</name>
    <name type="ordered locus">lhv_0319</name>
</gene>
<evidence type="ECO:0000255" key="1">
    <source>
        <dbReference type="HAMAP-Rule" id="MF_01342"/>
    </source>
</evidence>
<evidence type="ECO:0000305" key="2"/>
<accession>A8YXL2</accession>
<feature type="chain" id="PRO_1000073327" description="Large ribosomal subunit protein uL16">
    <location>
        <begin position="1"/>
        <end position="146"/>
    </location>
</feature>
<name>RL16_LACH4</name>